<comment type="function">
    <text evidence="3 4 5">Mediates the voltage-dependent potassium ion permeability of excitable membranes. Assuming opened or closed conformations in response to the voltage difference across the membrane, the protein forms a potassium-selective channel through which potassium ions may pass in accordance with their electrochemical gradient. Channels formed by isoform 1 inactivate faster than channels formed by isoform 2.</text>
</comment>
<comment type="catalytic activity">
    <reaction evidence="3 4 5">
        <text>K(+)(in) = K(+)(out)</text>
        <dbReference type="Rhea" id="RHEA:29463"/>
        <dbReference type="ChEBI" id="CHEBI:29103"/>
    </reaction>
</comment>
<comment type="subunit">
    <text evidence="1">Heterotetramer of potassium channel proteins.</text>
</comment>
<comment type="subcellular location">
    <subcellularLocation>
        <location evidence="3 4 5">Membrane</location>
        <topology evidence="3 4 5">Multi-pass membrane protein</topology>
    </subcellularLocation>
</comment>
<comment type="alternative products">
    <event type="alternative splicing"/>
    <event type="alternative initiation"/>
    <isoform>
        <id>Q17ST2-1</id>
        <name>1</name>
        <name>Kv1.7L</name>
        <sequence type="displayed"/>
    </isoform>
    <isoform>
        <id>Q17ST2-2</id>
        <name>2</name>
        <name>Kv1.7S</name>
        <sequence type="described" ref="VSP_028953"/>
    </isoform>
</comment>
<comment type="tissue specificity">
    <text evidence="4 5">Detected in heart, skeletal muscle, brain, and pancreatic islet cells.</text>
</comment>
<comment type="domain">
    <text>The N-terminus may be important in determining the rate of inactivation of the channel while the tail may play a role in modulation of channel activity and/or targeting of the channel to specific subcellular compartments.</text>
</comment>
<comment type="domain">
    <text>The segment S4 is probably the voltage-sensor and is characterized by a series of positively charged amino acids at every third position.</text>
</comment>
<comment type="miscellaneous">
    <molecule>Isoform 2</molecule>
    <text evidence="7">Produced by alternative initiation at Met-33 of isoform 1.</text>
</comment>
<comment type="similarity">
    <text evidence="7">Belongs to the potassium channel family. A (Shaker) (TC 1.A.1.2) subfamily. Kv1.7/KCNA7 sub-subfamily.</text>
</comment>
<comment type="sequence caution" evidence="7">
    <conflict type="frameshift">
        <sequence resource="EMBL-CDS" id="AAC12271"/>
    </conflict>
</comment>
<comment type="sequence caution" evidence="7">
    <conflict type="frameshift">
        <sequence resource="EMBL-CDS" id="AAC23664"/>
    </conflict>
</comment>
<dbReference type="EMBL" id="AF032099">
    <property type="protein sequence ID" value="AAC12271.1"/>
    <property type="status" value="ALT_FRAME"/>
    <property type="molecule type" value="mRNA"/>
</dbReference>
<dbReference type="EMBL" id="AF032101">
    <property type="protein sequence ID" value="AAC23664.1"/>
    <property type="status" value="ALT_FRAME"/>
    <property type="molecule type" value="Genomic_DNA"/>
</dbReference>
<dbReference type="EMBL" id="AF032100">
    <property type="protein sequence ID" value="AAC23664.1"/>
    <property type="status" value="JOINED"/>
    <property type="molecule type" value="Genomic_DNA"/>
</dbReference>
<dbReference type="EMBL" id="AY779767">
    <property type="protein sequence ID" value="AAX11185.1"/>
    <property type="molecule type" value="mRNA"/>
</dbReference>
<dbReference type="CCDS" id="CCDS39951.1">
    <molecule id="Q17ST2-1"/>
</dbReference>
<dbReference type="PIR" id="S09047">
    <property type="entry name" value="S09047"/>
</dbReference>
<dbReference type="RefSeq" id="NP_034726.2">
    <molecule id="Q17ST2-1"/>
    <property type="nucleotide sequence ID" value="NM_010596.2"/>
</dbReference>
<dbReference type="SMR" id="Q17ST2"/>
<dbReference type="CORUM" id="Q17ST2"/>
<dbReference type="FunCoup" id="Q17ST2">
    <property type="interactions" value="6"/>
</dbReference>
<dbReference type="STRING" id="10090.ENSMUSP00000103403"/>
<dbReference type="DrugCentral" id="Q17ST2"/>
<dbReference type="GuidetoPHARMACOLOGY" id="544"/>
<dbReference type="GlyCosmos" id="Q17ST2">
    <property type="glycosylation" value="1 site, No reported glycans"/>
</dbReference>
<dbReference type="GlyGen" id="Q17ST2">
    <property type="glycosylation" value="1 site"/>
</dbReference>
<dbReference type="iPTMnet" id="Q17ST2"/>
<dbReference type="PhosphoSitePlus" id="Q17ST2"/>
<dbReference type="jPOST" id="Q17ST2"/>
<dbReference type="PaxDb" id="10090-ENSMUSP00000103403"/>
<dbReference type="ProteomicsDB" id="263592">
    <molecule id="Q17ST2-1"/>
</dbReference>
<dbReference type="ProteomicsDB" id="263593">
    <molecule id="Q17ST2-2"/>
</dbReference>
<dbReference type="ABCD" id="Q17ST2">
    <property type="antibodies" value="1 sequenced antibody"/>
</dbReference>
<dbReference type="Antibodypedia" id="18500">
    <property type="antibodies" value="74 antibodies from 22 providers"/>
</dbReference>
<dbReference type="DNASU" id="16495"/>
<dbReference type="Ensembl" id="ENSMUST00000107774.3">
    <molecule id="Q17ST2-1"/>
    <property type="protein sequence ID" value="ENSMUSP00000103403.2"/>
    <property type="gene ID" value="ENSMUSG00000038201.11"/>
</dbReference>
<dbReference type="GeneID" id="16495"/>
<dbReference type="KEGG" id="mmu:16495"/>
<dbReference type="UCSC" id="uc009guz.1">
    <molecule id="Q17ST2-1"/>
    <property type="organism name" value="mouse"/>
</dbReference>
<dbReference type="AGR" id="MGI:96664"/>
<dbReference type="CTD" id="3743"/>
<dbReference type="MGI" id="MGI:96664">
    <property type="gene designation" value="Kcna7"/>
</dbReference>
<dbReference type="VEuPathDB" id="HostDB:ENSMUSG00000038201"/>
<dbReference type="eggNOG" id="KOG1545">
    <property type="taxonomic scope" value="Eukaryota"/>
</dbReference>
<dbReference type="GeneTree" id="ENSGT00940000162339"/>
<dbReference type="HOGENOM" id="CLU_011722_4_0_1"/>
<dbReference type="InParanoid" id="Q17ST2"/>
<dbReference type="OMA" id="MPFDDPF"/>
<dbReference type="OrthoDB" id="415460at2759"/>
<dbReference type="PhylomeDB" id="Q17ST2"/>
<dbReference type="TreeFam" id="TF313103"/>
<dbReference type="Reactome" id="R-MMU-1296072">
    <property type="pathway name" value="Voltage gated Potassium channels"/>
</dbReference>
<dbReference type="BioGRID-ORCS" id="16495">
    <property type="hits" value="2 hits in 76 CRISPR screens"/>
</dbReference>
<dbReference type="PRO" id="PR:Q17ST2"/>
<dbReference type="Proteomes" id="UP000000589">
    <property type="component" value="Chromosome 7"/>
</dbReference>
<dbReference type="RNAct" id="Q17ST2">
    <property type="molecule type" value="protein"/>
</dbReference>
<dbReference type="Bgee" id="ENSMUSG00000038201">
    <property type="expression patterns" value="Expressed in hindlimb stylopod muscle and 15 other cell types or tissues"/>
</dbReference>
<dbReference type="GO" id="GO:0008076">
    <property type="term" value="C:voltage-gated potassium channel complex"/>
    <property type="evidence" value="ECO:0007669"/>
    <property type="project" value="InterPro"/>
</dbReference>
<dbReference type="GO" id="GO:0005249">
    <property type="term" value="F:voltage-gated potassium channel activity"/>
    <property type="evidence" value="ECO:0000314"/>
    <property type="project" value="UniProtKB"/>
</dbReference>
<dbReference type="GO" id="GO:0051260">
    <property type="term" value="P:protein homooligomerization"/>
    <property type="evidence" value="ECO:0007669"/>
    <property type="project" value="InterPro"/>
</dbReference>
<dbReference type="CDD" id="cd18408">
    <property type="entry name" value="BTB_POZ_KCNA7"/>
    <property type="match status" value="1"/>
</dbReference>
<dbReference type="FunFam" id="1.10.287.70:FF:000002">
    <property type="entry name" value="Potassium voltage-gated channel subfamily a member"/>
    <property type="match status" value="1"/>
</dbReference>
<dbReference type="FunFam" id="1.20.120.350:FF:000028">
    <property type="entry name" value="Potassium voltage-gated channel subfamily a member"/>
    <property type="match status" value="1"/>
</dbReference>
<dbReference type="FunFam" id="3.30.710.10:FF:000122">
    <property type="entry name" value="potassium voltage-gated channel subfamily A member 7"/>
    <property type="match status" value="1"/>
</dbReference>
<dbReference type="Gene3D" id="1.10.287.70">
    <property type="match status" value="1"/>
</dbReference>
<dbReference type="Gene3D" id="3.30.710.10">
    <property type="entry name" value="Potassium Channel Kv1.1, Chain A"/>
    <property type="match status" value="1"/>
</dbReference>
<dbReference type="Gene3D" id="1.20.120.350">
    <property type="entry name" value="Voltage-gated potassium channels. Chain C"/>
    <property type="match status" value="1"/>
</dbReference>
<dbReference type="InterPro" id="IPR000210">
    <property type="entry name" value="BTB/POZ_dom"/>
</dbReference>
<dbReference type="InterPro" id="IPR005821">
    <property type="entry name" value="Ion_trans_dom"/>
</dbReference>
<dbReference type="InterPro" id="IPR003968">
    <property type="entry name" value="K_chnl_volt-dep_Kv"/>
</dbReference>
<dbReference type="InterPro" id="IPR003972">
    <property type="entry name" value="K_chnl_volt-dep_Kv1"/>
</dbReference>
<dbReference type="InterPro" id="IPR048219">
    <property type="entry name" value="KCNA7_BTB_POZ"/>
</dbReference>
<dbReference type="InterPro" id="IPR011333">
    <property type="entry name" value="SKP1/BTB/POZ_sf"/>
</dbReference>
<dbReference type="InterPro" id="IPR003131">
    <property type="entry name" value="T1-type_BTB"/>
</dbReference>
<dbReference type="InterPro" id="IPR028325">
    <property type="entry name" value="VG_K_chnl"/>
</dbReference>
<dbReference type="InterPro" id="IPR027359">
    <property type="entry name" value="Volt_channel_dom_sf"/>
</dbReference>
<dbReference type="PANTHER" id="PTHR11537:SF155">
    <property type="entry name" value="POTASSIUM VOLTAGE-GATED CHANNEL SUBFAMILY A MEMBER 7"/>
    <property type="match status" value="1"/>
</dbReference>
<dbReference type="PANTHER" id="PTHR11537">
    <property type="entry name" value="VOLTAGE-GATED POTASSIUM CHANNEL"/>
    <property type="match status" value="1"/>
</dbReference>
<dbReference type="Pfam" id="PF02214">
    <property type="entry name" value="BTB_2"/>
    <property type="match status" value="1"/>
</dbReference>
<dbReference type="Pfam" id="PF00520">
    <property type="entry name" value="Ion_trans"/>
    <property type="match status" value="1"/>
</dbReference>
<dbReference type="PRINTS" id="PR00169">
    <property type="entry name" value="KCHANNEL"/>
</dbReference>
<dbReference type="PRINTS" id="PR01491">
    <property type="entry name" value="KVCHANNEL"/>
</dbReference>
<dbReference type="PRINTS" id="PR01496">
    <property type="entry name" value="SHAKERCHANEL"/>
</dbReference>
<dbReference type="SMART" id="SM00225">
    <property type="entry name" value="BTB"/>
    <property type="match status" value="1"/>
</dbReference>
<dbReference type="SUPFAM" id="SSF54695">
    <property type="entry name" value="POZ domain"/>
    <property type="match status" value="1"/>
</dbReference>
<dbReference type="SUPFAM" id="SSF81324">
    <property type="entry name" value="Voltage-gated potassium channels"/>
    <property type="match status" value="1"/>
</dbReference>
<protein>
    <recommendedName>
        <fullName>Potassium voltage-gated channel subfamily A member 7</fullName>
    </recommendedName>
    <alternativeName>
        <fullName>Voltage-gated potassium channel subunit Kv1.7</fullName>
    </alternativeName>
</protein>
<sequence>MLFLPADTGHPTGVAAASGPHVRSPVARAVRAMEPRCPPPCGCCERLVLNVAGLRFETRARTLGRFPDTLLGDPVRRSRFYDGARREYFFDRHRPSFDAVLYYYQSGGRLRRPAHVPLDVFLEEVSFYGLGAAALARLREDEGCAVPPERPLPRRAFARQLWLLFEFPESSQAARVLAVVSVLVILVSIVVFCLETLPDFRDDRDDPGLAPVAAATGPFLARLNGSSPMPGAPPRQPFNDPFFVVETLCICWFSFELLVRLVACPSKAVFFKNVMNLIDFVAILPYFVALGTELARQRGVGQPAMSLAILRVIRLVRVFRIFKLSRHSKGLQILGQTLRASMRELGLLIFFLFIGVVLFSSAVYFAEVDRVDTHFTSIPESFWWAVVTMTTVGYGDMAPVTVGGKIVGSLCAIAGVLTISLPVPVIVSNFSYFYHRETEGEEAGMYSHVDTQPCGTLEGKANGGLVDSEVPELLPPLWPPAGKHMVTEV</sequence>
<evidence type="ECO:0000250" key="1"/>
<evidence type="ECO:0000255" key="2"/>
<evidence type="ECO:0000269" key="3">
    <source>
    </source>
</evidence>
<evidence type="ECO:0000269" key="4">
    <source>
    </source>
</evidence>
<evidence type="ECO:0000269" key="5">
    <source>
    </source>
</evidence>
<evidence type="ECO:0000303" key="6">
    <source>
    </source>
</evidence>
<evidence type="ECO:0000305" key="7"/>
<reference key="1">
    <citation type="journal article" date="1998" name="J. Biol. Chem.">
        <title>Genomic organization, chromosomal localization, tissue distribution, and biophysical characterization of a novel mammalian Shaker-related voltage-gated potassium channel, Kv1.7.</title>
        <authorList>
            <person name="Kalman K."/>
            <person name="Nguyen A."/>
            <person name="Tseng-Crank J."/>
            <person name="Dukes I.D."/>
            <person name="Chandy G."/>
            <person name="Hustad C.M."/>
            <person name="Copeland N.G."/>
            <person name="Jenkins N.A."/>
            <person name="Mohrenweiser H."/>
            <person name="Brandriff B."/>
            <person name="Cahalan M."/>
            <person name="Gutman G.A."/>
            <person name="Chandy K.G."/>
        </authorList>
    </citation>
    <scope>NUCLEOTIDE SEQUENCE [GENOMIC DNA / MRNA] (ISOFORM 1)</scope>
    <scope>FUNCTION</scope>
    <scope>SUBCELLULAR LOCATION</scope>
    <scope>TISSUE SPECIFICITY</scope>
    <scope>TRANSPORTER ACTIVITY</scope>
    <source>
        <tissue>Brain</tissue>
    </source>
</reference>
<reference key="2">
    <citation type="journal article" date="2006" name="J. Gen. Physiol.">
        <title>Molecular and functional differences between heart mKv1.7 channel isoforms.</title>
        <authorList>
            <person name="Finol-Urdaneta R.K."/>
            <person name="Struever N."/>
            <person name="Terlau H."/>
        </authorList>
    </citation>
    <scope>NUCLEOTIDE SEQUENCE [MRNA] (ISOFORMS 1 AND 2)</scope>
    <scope>FUNCTION</scope>
    <scope>SUBCELLULAR LOCATION</scope>
    <scope>TISSUE SPECIFICITY</scope>
    <scope>TRANSPORTER ACTIVITY</scope>
    <source>
        <strain>NMRI</strain>
        <tissue>Heart</tissue>
        <tissue>Skeletal muscle</tissue>
    </source>
</reference>
<reference key="3">
    <citation type="journal article" date="2002" name="Eur. J. Hum. Genet.">
        <title>Characterisation of the human voltage-gated potassium channel gene, KCNA7, a candidate gene for inherited cardiac disorders, and its exclusion as cause of progressive familial heart block I (PFHBI).</title>
        <authorList>
            <person name="Bardien-Kruger S."/>
            <person name="Wulff H."/>
            <person name="Arieff Z."/>
            <person name="Brink P."/>
            <person name="Chandy K.G."/>
            <person name="Corfield V."/>
        </authorList>
    </citation>
    <scope>FUNCTION</scope>
    <scope>SUBCELLULAR LOCATION</scope>
    <scope>TRANSPORTER ACTIVITY</scope>
</reference>
<name>KCNA7_MOUSE</name>
<gene>
    <name type="primary">Kcna7</name>
    <name type="synonym">Kcnc7</name>
</gene>
<organism>
    <name type="scientific">Mus musculus</name>
    <name type="common">Mouse</name>
    <dbReference type="NCBI Taxonomy" id="10090"/>
    <lineage>
        <taxon>Eukaryota</taxon>
        <taxon>Metazoa</taxon>
        <taxon>Chordata</taxon>
        <taxon>Craniata</taxon>
        <taxon>Vertebrata</taxon>
        <taxon>Euteleostomi</taxon>
        <taxon>Mammalia</taxon>
        <taxon>Eutheria</taxon>
        <taxon>Euarchontoglires</taxon>
        <taxon>Glires</taxon>
        <taxon>Rodentia</taxon>
        <taxon>Myomorpha</taxon>
        <taxon>Muroidea</taxon>
        <taxon>Muridae</taxon>
        <taxon>Murinae</taxon>
        <taxon>Mus</taxon>
        <taxon>Mus</taxon>
    </lineage>
</organism>
<proteinExistence type="evidence at transcript level"/>
<accession>Q17ST2</accession>
<accession>O70259</accession>
<feature type="chain" id="PRO_0000308274" description="Potassium voltage-gated channel subfamily A member 7">
    <location>
        <begin position="1"/>
        <end position="489"/>
    </location>
</feature>
<feature type="transmembrane region" description="Helical; Name=Segment S1" evidence="2">
    <location>
        <begin position="176"/>
        <end position="196"/>
    </location>
</feature>
<feature type="transmembrane region" description="Helical; Name=Segment S2" evidence="2">
    <location>
        <begin position="242"/>
        <end position="262"/>
    </location>
</feature>
<feature type="transmembrane region" description="Helical; Name=Segment S3" evidence="2">
    <location>
        <begin position="274"/>
        <end position="294"/>
    </location>
</feature>
<feature type="transmembrane region" description="Helical; Voltage-sensor; Name=Segment S4" evidence="2">
    <location>
        <begin position="309"/>
        <end position="328"/>
    </location>
</feature>
<feature type="transmembrane region" description="Helical; Name=Segment S5" evidence="2">
    <location>
        <begin position="345"/>
        <end position="365"/>
    </location>
</feature>
<feature type="transmembrane region" description="Helical; Name=Segment S6" evidence="2">
    <location>
        <begin position="406"/>
        <end position="426"/>
    </location>
</feature>
<feature type="short sequence motif" description="Selectivity filter" evidence="1">
    <location>
        <begin position="391"/>
        <end position="396"/>
    </location>
</feature>
<feature type="lipid moiety-binding region" description="S-palmitoyl cysteine" evidence="2">
    <location>
        <position position="264"/>
    </location>
</feature>
<feature type="glycosylation site" description="N-linked (GlcNAc...) asparagine" evidence="2">
    <location>
        <position position="224"/>
    </location>
</feature>
<feature type="splice variant" id="VSP_028953" description="In isoform 2." evidence="6">
    <location>
        <begin position="1"/>
        <end position="32"/>
    </location>
</feature>
<feature type="sequence conflict" description="In Ref. 1; AAC12271." evidence="7" ref="1">
    <original>R</original>
    <variation>A</variation>
    <location>
        <position position="86"/>
    </location>
</feature>
<feature type="sequence conflict" description="In Ref. 2; AAX11185." evidence="7" ref="2">
    <original>V</original>
    <variation>L</variation>
    <location>
        <position position="116"/>
    </location>
</feature>
<feature type="sequence conflict" description="In Ref. 1; AAC12271." evidence="7" ref="1">
    <original>P</original>
    <variation>S</variation>
    <location>
        <position position="218"/>
    </location>
</feature>
<feature type="sequence conflict" description="In Ref. 1; AAC12271." evidence="7" ref="1">
    <original>R</original>
    <variation>H</variation>
    <location>
        <position position="260"/>
    </location>
</feature>
<keyword id="KW-0024">Alternative initiation</keyword>
<keyword id="KW-0025">Alternative splicing</keyword>
<keyword id="KW-0325">Glycoprotein</keyword>
<keyword id="KW-0407">Ion channel</keyword>
<keyword id="KW-0406">Ion transport</keyword>
<keyword id="KW-0449">Lipoprotein</keyword>
<keyword id="KW-0472">Membrane</keyword>
<keyword id="KW-0564">Palmitate</keyword>
<keyword id="KW-0630">Potassium</keyword>
<keyword id="KW-0631">Potassium channel</keyword>
<keyword id="KW-0633">Potassium transport</keyword>
<keyword id="KW-1185">Reference proteome</keyword>
<keyword id="KW-0812">Transmembrane</keyword>
<keyword id="KW-1133">Transmembrane helix</keyword>
<keyword id="KW-0813">Transport</keyword>
<keyword id="KW-0851">Voltage-gated channel</keyword>